<dbReference type="EC" id="3.2.1.78" evidence="1"/>
<dbReference type="EMBL" id="D37964">
    <property type="protein sequence ID" value="BAA07178.1"/>
    <property type="molecule type" value="Genomic_DNA"/>
</dbReference>
<dbReference type="PIR" id="S60268">
    <property type="entry name" value="S60268"/>
</dbReference>
<dbReference type="SMR" id="P55278"/>
<dbReference type="CAZy" id="GH26">
    <property type="family name" value="Glycoside Hydrolase Family 26"/>
</dbReference>
<dbReference type="GO" id="GO:0005576">
    <property type="term" value="C:extracellular region"/>
    <property type="evidence" value="ECO:0007669"/>
    <property type="project" value="UniProtKB-SubCell"/>
</dbReference>
<dbReference type="GO" id="GO:0016985">
    <property type="term" value="F:mannan endo-1,4-beta-mannosidase activity"/>
    <property type="evidence" value="ECO:0007669"/>
    <property type="project" value="UniProtKB-EC"/>
</dbReference>
<dbReference type="GO" id="GO:0000272">
    <property type="term" value="P:polysaccharide catabolic process"/>
    <property type="evidence" value="ECO:0007669"/>
    <property type="project" value="UniProtKB-KW"/>
</dbReference>
<dbReference type="GO" id="GO:0006080">
    <property type="term" value="P:substituted mannan metabolic process"/>
    <property type="evidence" value="ECO:0007669"/>
    <property type="project" value="InterPro"/>
</dbReference>
<dbReference type="Gene3D" id="3.20.20.80">
    <property type="entry name" value="Glycosidases"/>
    <property type="match status" value="1"/>
</dbReference>
<dbReference type="InterPro" id="IPR022790">
    <property type="entry name" value="GH26_dom"/>
</dbReference>
<dbReference type="InterPro" id="IPR000805">
    <property type="entry name" value="Glyco_hydro_26"/>
</dbReference>
<dbReference type="InterPro" id="IPR017853">
    <property type="entry name" value="Glycoside_hydrolase_SF"/>
</dbReference>
<dbReference type="InterPro" id="IPR016714">
    <property type="entry name" value="MANB/E"/>
</dbReference>
<dbReference type="PANTHER" id="PTHR40079:SF4">
    <property type="entry name" value="GH26 DOMAIN-CONTAINING PROTEIN-RELATED"/>
    <property type="match status" value="1"/>
</dbReference>
<dbReference type="PANTHER" id="PTHR40079">
    <property type="entry name" value="MANNAN ENDO-1,4-BETA-MANNOSIDASE E-RELATED"/>
    <property type="match status" value="1"/>
</dbReference>
<dbReference type="Pfam" id="PF02156">
    <property type="entry name" value="Glyco_hydro_26"/>
    <property type="match status" value="1"/>
</dbReference>
<dbReference type="PIRSF" id="PIRSF018168">
    <property type="entry name" value="Mannan-1_4-beta-mannosidase"/>
    <property type="match status" value="1"/>
</dbReference>
<dbReference type="PRINTS" id="PR00739">
    <property type="entry name" value="GLHYDRLASE26"/>
</dbReference>
<dbReference type="SUPFAM" id="SSF51445">
    <property type="entry name" value="(Trans)glycosidases"/>
    <property type="match status" value="1"/>
</dbReference>
<dbReference type="PROSITE" id="PS51764">
    <property type="entry name" value="GH26"/>
    <property type="match status" value="1"/>
</dbReference>
<name>MANB_BACIU</name>
<organism>
    <name type="scientific">Bacillus subtilis</name>
    <dbReference type="NCBI Taxonomy" id="1423"/>
    <lineage>
        <taxon>Bacteria</taxon>
        <taxon>Bacillati</taxon>
        <taxon>Bacillota</taxon>
        <taxon>Bacilli</taxon>
        <taxon>Bacillales</taxon>
        <taxon>Bacillaceae</taxon>
        <taxon>Bacillus</taxon>
    </lineage>
</organism>
<protein>
    <recommendedName>
        <fullName evidence="5">Mannan endo-1,4-beta-mannosidase</fullName>
        <ecNumber evidence="1">3.2.1.78</ecNumber>
    </recommendedName>
    <alternativeName>
        <fullName evidence="5">1,4-beta-D-mannan mannanohydrolase</fullName>
    </alternativeName>
    <alternativeName>
        <fullName evidence="5">Beta-mannanase</fullName>
    </alternativeName>
</protein>
<proteinExistence type="inferred from homology"/>
<comment type="function">
    <text evidence="1">Involved in the degradation of glucomannan. Catalyzes the endo hydrolysis of beta-1,4-linked mannan, galactomannan and glucomannan.</text>
</comment>
<comment type="catalytic activity">
    <reaction evidence="1">
        <text>Random hydrolysis of (1-&gt;4)-beta-D-mannosidic linkages in mannans, galactomannans and glucomannans.</text>
        <dbReference type="EC" id="3.2.1.78"/>
    </reaction>
</comment>
<comment type="subunit">
    <text evidence="1">Homodimer.</text>
</comment>
<comment type="subcellular location">
    <subcellularLocation>
        <location evidence="1">Secreted</location>
    </subcellularLocation>
</comment>
<comment type="similarity">
    <text evidence="4 6">Belongs to the glycosyl hydrolase 26 family.</text>
</comment>
<accession>P55278</accession>
<evidence type="ECO:0000250" key="1">
    <source>
        <dbReference type="UniProtKB" id="O05512"/>
    </source>
</evidence>
<evidence type="ECO:0000250" key="2">
    <source>
        <dbReference type="UniProtKB" id="P49424"/>
    </source>
</evidence>
<evidence type="ECO:0000255" key="3"/>
<evidence type="ECO:0000255" key="4">
    <source>
        <dbReference type="PROSITE-ProRule" id="PRU01100"/>
    </source>
</evidence>
<evidence type="ECO:0000303" key="5">
    <source>
    </source>
</evidence>
<evidence type="ECO:0000305" key="6"/>
<keyword id="KW-0119">Carbohydrate metabolism</keyword>
<keyword id="KW-0326">Glycosidase</keyword>
<keyword id="KW-0378">Hydrolase</keyword>
<keyword id="KW-0624">Polysaccharide degradation</keyword>
<keyword id="KW-0964">Secreted</keyword>
<keyword id="KW-0732">Signal</keyword>
<sequence length="360" mass="40295">MLKKLAVCLSIVLLLLGAASPISAHTVYPVNPNAQQTTKDIMNWLAHLPNRSENRVMSGAFGGYSDVTFSMTEENRLKNATGQSPAIYGCDYGRGWLETADITDTIDYCCNSSLISYWKSGGLPQVSLHLANPAFPSGNYKTAISNSQYKNILDPSTVEGKRLEALLSKIADGLTQLKNQGVTVLFRPLHEMNGEWFWWGLTGYNQKDNERISLYKELYKKIYRYMTETRGLDNLLWVYSPDANRDFKTDFYPGSSYVDITGLDAYFTDPYAISGYDEMLSLKKPFAFAETGPSGNIGSFDYAAFINAIRQKYPQTTYFLTWDEQLSPAANQGAQSLYQNSWTLNKGEIWNGGSLTPIAE</sequence>
<reference key="1">
    <citation type="journal article" date="1995" name="Biochim. Biophys. Acta">
        <title>Cloning and sequencing of beta-mannanase gene from Bacillus subtilis NM-39.</title>
        <authorList>
            <person name="Mendoza N.S."/>
            <person name="Arai M."/>
            <person name="Sugimoto K."/>
            <person name="Ueda M."/>
            <person name="Kawaguchi T."/>
            <person name="Joson L.M."/>
        </authorList>
    </citation>
    <scope>NUCLEOTIDE SEQUENCE [GENOMIC DNA]</scope>
    <source>
        <strain>NM-39</strain>
    </source>
</reference>
<feature type="signal peptide" evidence="3">
    <location>
        <begin position="1"/>
        <end position="24"/>
    </location>
</feature>
<feature type="chain" id="PRO_0000012171" description="Mannan endo-1,4-beta-mannosidase">
    <location>
        <begin position="25"/>
        <end position="360"/>
    </location>
</feature>
<feature type="domain" description="GH26" evidence="4">
    <location>
        <begin position="36"/>
        <end position="347"/>
    </location>
</feature>
<feature type="active site" description="Proton donor" evidence="2">
    <location>
        <position position="191"/>
    </location>
</feature>
<feature type="active site" description="Nucleophile" evidence="2">
    <location>
        <position position="290"/>
    </location>
</feature>
<feature type="binding site" evidence="2">
    <location>
        <position position="129"/>
    </location>
    <ligand>
        <name>substrate</name>
    </ligand>
</feature>
<feature type="binding site" evidence="2">
    <location>
        <position position="196"/>
    </location>
    <ligand>
        <name>substrate</name>
    </ligand>
</feature>
<feature type="binding site" evidence="2">
    <location>
        <position position="266"/>
    </location>
    <ligand>
        <name>substrate</name>
    </ligand>
</feature>
<feature type="site" description="Plays an important role in maintaining the position of the catalytic nucleophile" evidence="2">
    <location>
        <position position="190"/>
    </location>
</feature>